<name>MURQ_CLOAB</name>
<comment type="function">
    <text evidence="1">Specifically catalyzes the cleavage of the D-lactyl ether substituent of MurNAc 6-phosphate, producing GlcNAc 6-phosphate and D-lactate.</text>
</comment>
<comment type="catalytic activity">
    <reaction evidence="1">
        <text>N-acetyl-D-muramate 6-phosphate + H2O = N-acetyl-D-glucosamine 6-phosphate + (R)-lactate</text>
        <dbReference type="Rhea" id="RHEA:26410"/>
        <dbReference type="ChEBI" id="CHEBI:15377"/>
        <dbReference type="ChEBI" id="CHEBI:16004"/>
        <dbReference type="ChEBI" id="CHEBI:57513"/>
        <dbReference type="ChEBI" id="CHEBI:58722"/>
        <dbReference type="EC" id="4.2.1.126"/>
    </reaction>
</comment>
<comment type="pathway">
    <text evidence="1">Amino-sugar metabolism; N-acetylmuramate degradation.</text>
</comment>
<comment type="subunit">
    <text evidence="1">Homodimer.</text>
</comment>
<comment type="miscellaneous">
    <text evidence="1">A lyase-type mechanism (elimination/hydration) is suggested for the cleavage of the lactyl ether bond of MurNAc 6-phosphate, with the formation of an alpha,beta-unsaturated aldehyde intermediate with (E)-stereochemistry, followed by the syn addition of water to give product.</text>
</comment>
<comment type="similarity">
    <text evidence="1">Belongs to the GCKR-like family. MurNAc-6-P etherase subfamily.</text>
</comment>
<proteinExistence type="inferred from homology"/>
<accession>Q97MM1</accession>
<evidence type="ECO:0000255" key="1">
    <source>
        <dbReference type="HAMAP-Rule" id="MF_00068"/>
    </source>
</evidence>
<keyword id="KW-0119">Carbohydrate metabolism</keyword>
<keyword id="KW-0456">Lyase</keyword>
<keyword id="KW-1185">Reference proteome</keyword>
<dbReference type="EC" id="4.2.1.126" evidence="1"/>
<dbReference type="EMBL" id="AE001437">
    <property type="protein sequence ID" value="AAK78157.1"/>
    <property type="molecule type" value="Genomic_DNA"/>
</dbReference>
<dbReference type="PIR" id="B96921">
    <property type="entry name" value="B96921"/>
</dbReference>
<dbReference type="RefSeq" id="NP_346817.1">
    <property type="nucleotide sequence ID" value="NC_003030.1"/>
</dbReference>
<dbReference type="RefSeq" id="WP_010963499.1">
    <property type="nucleotide sequence ID" value="NC_003030.1"/>
</dbReference>
<dbReference type="SMR" id="Q97MM1"/>
<dbReference type="STRING" id="272562.CA_C0175"/>
<dbReference type="GeneID" id="44996667"/>
<dbReference type="KEGG" id="cac:CA_C0175"/>
<dbReference type="PATRIC" id="fig|272562.8.peg.360"/>
<dbReference type="eggNOG" id="COG2103">
    <property type="taxonomic scope" value="Bacteria"/>
</dbReference>
<dbReference type="HOGENOM" id="CLU_049049_1_1_9"/>
<dbReference type="OrthoDB" id="9813395at2"/>
<dbReference type="UniPathway" id="UPA00342"/>
<dbReference type="Proteomes" id="UP000000814">
    <property type="component" value="Chromosome"/>
</dbReference>
<dbReference type="GO" id="GO:0097367">
    <property type="term" value="F:carbohydrate derivative binding"/>
    <property type="evidence" value="ECO:0007669"/>
    <property type="project" value="InterPro"/>
</dbReference>
<dbReference type="GO" id="GO:0016835">
    <property type="term" value="F:carbon-oxygen lyase activity"/>
    <property type="evidence" value="ECO:0007669"/>
    <property type="project" value="UniProtKB-UniRule"/>
</dbReference>
<dbReference type="GO" id="GO:0016803">
    <property type="term" value="F:ether hydrolase activity"/>
    <property type="evidence" value="ECO:0007669"/>
    <property type="project" value="TreeGrafter"/>
</dbReference>
<dbReference type="GO" id="GO:0046348">
    <property type="term" value="P:amino sugar catabolic process"/>
    <property type="evidence" value="ECO:0007669"/>
    <property type="project" value="InterPro"/>
</dbReference>
<dbReference type="GO" id="GO:0097173">
    <property type="term" value="P:N-acetylmuramic acid catabolic process"/>
    <property type="evidence" value="ECO:0007669"/>
    <property type="project" value="UniProtKB-UniPathway"/>
</dbReference>
<dbReference type="GO" id="GO:0009254">
    <property type="term" value="P:peptidoglycan turnover"/>
    <property type="evidence" value="ECO:0007669"/>
    <property type="project" value="TreeGrafter"/>
</dbReference>
<dbReference type="CDD" id="cd05007">
    <property type="entry name" value="SIS_Etherase"/>
    <property type="match status" value="1"/>
</dbReference>
<dbReference type="FunFam" id="3.40.50.10490:FF:000014">
    <property type="entry name" value="N-acetylmuramic acid 6-phosphate etherase"/>
    <property type="match status" value="1"/>
</dbReference>
<dbReference type="Gene3D" id="1.10.8.1080">
    <property type="match status" value="1"/>
</dbReference>
<dbReference type="Gene3D" id="3.40.50.10490">
    <property type="entry name" value="Glucose-6-phosphate isomerase like protein, domain 1"/>
    <property type="match status" value="1"/>
</dbReference>
<dbReference type="HAMAP" id="MF_00068">
    <property type="entry name" value="MurQ"/>
    <property type="match status" value="1"/>
</dbReference>
<dbReference type="InterPro" id="IPR005488">
    <property type="entry name" value="Etherase_MurQ"/>
</dbReference>
<dbReference type="InterPro" id="IPR005486">
    <property type="entry name" value="Glucokinase_regulatory_CS"/>
</dbReference>
<dbReference type="InterPro" id="IPR040190">
    <property type="entry name" value="MURQ/GCKR"/>
</dbReference>
<dbReference type="InterPro" id="IPR001347">
    <property type="entry name" value="SIS_dom"/>
</dbReference>
<dbReference type="InterPro" id="IPR046348">
    <property type="entry name" value="SIS_dom_sf"/>
</dbReference>
<dbReference type="NCBIfam" id="TIGR00274">
    <property type="entry name" value="N-acetylmuramic acid 6-phosphate etherase"/>
    <property type="match status" value="1"/>
</dbReference>
<dbReference type="NCBIfam" id="NF003915">
    <property type="entry name" value="PRK05441.1"/>
    <property type="match status" value="1"/>
</dbReference>
<dbReference type="NCBIfam" id="NF009222">
    <property type="entry name" value="PRK12570.1"/>
    <property type="match status" value="1"/>
</dbReference>
<dbReference type="PANTHER" id="PTHR10088">
    <property type="entry name" value="GLUCOKINASE REGULATORY PROTEIN"/>
    <property type="match status" value="1"/>
</dbReference>
<dbReference type="PANTHER" id="PTHR10088:SF4">
    <property type="entry name" value="GLUCOKINASE REGULATORY PROTEIN"/>
    <property type="match status" value="1"/>
</dbReference>
<dbReference type="Pfam" id="PF20741">
    <property type="entry name" value="GKRP-like_C"/>
    <property type="match status" value="1"/>
</dbReference>
<dbReference type="Pfam" id="PF22645">
    <property type="entry name" value="GKRP_SIS_N"/>
    <property type="match status" value="1"/>
</dbReference>
<dbReference type="SUPFAM" id="SSF53697">
    <property type="entry name" value="SIS domain"/>
    <property type="match status" value="1"/>
</dbReference>
<dbReference type="PROSITE" id="PS01272">
    <property type="entry name" value="GCKR"/>
    <property type="match status" value="1"/>
</dbReference>
<dbReference type="PROSITE" id="PS51464">
    <property type="entry name" value="SIS"/>
    <property type="match status" value="1"/>
</dbReference>
<protein>
    <recommendedName>
        <fullName evidence="1">N-acetylmuramic acid 6-phosphate etherase</fullName>
        <shortName evidence="1">MurNAc-6-P etherase</shortName>
        <ecNumber evidence="1">4.2.1.126</ecNumber>
    </recommendedName>
    <alternativeName>
        <fullName evidence="1">N-acetylmuramic acid 6-phosphate hydrolase</fullName>
    </alternativeName>
    <alternativeName>
        <fullName evidence="1">N-acetylmuramic acid 6-phosphate lyase</fullName>
    </alternativeName>
</protein>
<organism>
    <name type="scientific">Clostridium acetobutylicum (strain ATCC 824 / DSM 792 / JCM 1419 / IAM 19013 / LMG 5710 / NBRC 13948 / NRRL B-527 / VKM B-1787 / 2291 / W)</name>
    <dbReference type="NCBI Taxonomy" id="272562"/>
    <lineage>
        <taxon>Bacteria</taxon>
        <taxon>Bacillati</taxon>
        <taxon>Bacillota</taxon>
        <taxon>Clostridia</taxon>
        <taxon>Eubacteriales</taxon>
        <taxon>Clostridiaceae</taxon>
        <taxon>Clostridium</taxon>
    </lineage>
</organism>
<reference key="1">
    <citation type="journal article" date="2001" name="J. Bacteriol.">
        <title>Genome sequence and comparative analysis of the solvent-producing bacterium Clostridium acetobutylicum.</title>
        <authorList>
            <person name="Noelling J."/>
            <person name="Breton G."/>
            <person name="Omelchenko M.V."/>
            <person name="Makarova K.S."/>
            <person name="Zeng Q."/>
            <person name="Gibson R."/>
            <person name="Lee H.M."/>
            <person name="Dubois J."/>
            <person name="Qiu D."/>
            <person name="Hitti J."/>
            <person name="Wolf Y.I."/>
            <person name="Tatusov R.L."/>
            <person name="Sabathe F."/>
            <person name="Doucette-Stamm L.A."/>
            <person name="Soucaille P."/>
            <person name="Daly M.J."/>
            <person name="Bennett G.N."/>
            <person name="Koonin E.V."/>
            <person name="Smith D.R."/>
        </authorList>
    </citation>
    <scope>NUCLEOTIDE SEQUENCE [LARGE SCALE GENOMIC DNA]</scope>
    <source>
        <strain>ATCC 824 / DSM 792 / JCM 1419 / IAM 19013 / LMG 5710 / NBRC 13948 / NRRL B-527 / VKM B-1787 / 2291 / W</strain>
    </source>
</reference>
<sequence>MNSHLEDLTTEKVNDDTVNIDVMNTEDMLKAINNEDIKVAYAVQKEIHNIVKAVDIVSEKLKNNGRLFYIGAGTSGRLGVLDASECPPTYGTNPELVQGIIAGGNEAILKAVEGAEDDEDMGRSIIKERNMTSKDVVIGITASGRTPFVIGAMKEARKNEIIAIGISNNKNSLINKNVDIKITPIVGPEVIMGSTRMKAGTAQKLVLNMITTAVMIKLGKVYGNLMIDLSLSNKKLIDRAVRIIEHATKVEKEKAMEYLKRANLKPKVAIVMIKTNTKSYEAERLLNMADGFVTKAIKLGSK</sequence>
<feature type="chain" id="PRO_0000249616" description="N-acetylmuramic acid 6-phosphate etherase">
    <location>
        <begin position="1"/>
        <end position="302"/>
    </location>
</feature>
<feature type="domain" description="SIS" evidence="1">
    <location>
        <begin position="57"/>
        <end position="220"/>
    </location>
</feature>
<feature type="active site" description="Proton donor" evidence="1">
    <location>
        <position position="85"/>
    </location>
</feature>
<feature type="active site" evidence="1">
    <location>
        <position position="116"/>
    </location>
</feature>
<gene>
    <name evidence="1" type="primary">murQ</name>
    <name type="ordered locus">CA_C0175</name>
</gene>